<comment type="function">
    <text evidence="2">Proton pump that utilizes the energy of pyrophosphate hydrolysis as the driving force for proton movement across the membrane. Generates a proton motive force.</text>
</comment>
<comment type="catalytic activity">
    <reaction evidence="2">
        <text>diphosphate + H2O + H(+)(in) = 2 phosphate + 2 H(+)(out)</text>
        <dbReference type="Rhea" id="RHEA:13973"/>
        <dbReference type="ChEBI" id="CHEBI:15377"/>
        <dbReference type="ChEBI" id="CHEBI:15378"/>
        <dbReference type="ChEBI" id="CHEBI:33019"/>
        <dbReference type="ChEBI" id="CHEBI:43474"/>
        <dbReference type="EC" id="7.1.3.1"/>
    </reaction>
</comment>
<comment type="cofactor">
    <cofactor evidence="2">
        <name>Mg(2+)</name>
        <dbReference type="ChEBI" id="CHEBI:18420"/>
    </cofactor>
</comment>
<comment type="subunit">
    <text evidence="2">Homodimer.</text>
</comment>
<comment type="subcellular location">
    <subcellularLocation>
        <location evidence="2">Cell membrane</location>
        <topology evidence="2">Multi-pass membrane protein</topology>
    </subcellularLocation>
</comment>
<comment type="similarity">
    <text evidence="2">Belongs to the H(+)-translocating pyrophosphatase (TC 3.A.10) family. K(+)-insensitive subfamily.</text>
</comment>
<accession>Q8PYZ7</accession>
<keyword id="KW-0106">Calcium</keyword>
<keyword id="KW-1003">Cell membrane</keyword>
<keyword id="KW-0375">Hydrogen ion transport</keyword>
<keyword id="KW-0406">Ion transport</keyword>
<keyword id="KW-0460">Magnesium</keyword>
<keyword id="KW-0472">Membrane</keyword>
<keyword id="KW-0479">Metal-binding</keyword>
<keyword id="KW-1278">Translocase</keyword>
<keyword id="KW-0812">Transmembrane</keyword>
<keyword id="KW-1133">Transmembrane helix</keyword>
<keyword id="KW-0813">Transport</keyword>
<reference key="1">
    <citation type="submission" date="2001-05" db="EMBL/GenBank/DDBJ databases">
        <title>Identification and analysis of proton-translocating pyrophosphatases in the methanogenic archaeon Methanosarcina mazei.</title>
        <authorList>
            <person name="Baeumer S."/>
            <person name="Lentes S."/>
            <person name="Gottschalk G."/>
            <person name="Deppenmeier U."/>
        </authorList>
    </citation>
    <scope>NUCLEOTIDE SEQUENCE [GENOMIC DNA]</scope>
    <source>
        <strain>ATCC BAA-159 / DSM 3647 / Goe1 / Go1 / JCM 11833 / OCM 88</strain>
    </source>
</reference>
<reference key="2">
    <citation type="journal article" date="2002" name="J. Mol. Microbiol. Biotechnol.">
        <title>The genome of Methanosarcina mazei: evidence for lateral gene transfer between Bacteria and Archaea.</title>
        <authorList>
            <person name="Deppenmeier U."/>
            <person name="Johann A."/>
            <person name="Hartsch T."/>
            <person name="Merkl R."/>
            <person name="Schmitz R.A."/>
            <person name="Martinez-Arias R."/>
            <person name="Henne A."/>
            <person name="Wiezer A."/>
            <person name="Baeumer S."/>
            <person name="Jacobi C."/>
            <person name="Brueggemann H."/>
            <person name="Lienard T."/>
            <person name="Christmann A."/>
            <person name="Boemecke M."/>
            <person name="Steckel S."/>
            <person name="Bhattacharyya A."/>
            <person name="Lykidis A."/>
            <person name="Overbeek R."/>
            <person name="Klenk H.-P."/>
            <person name="Gunsalus R.P."/>
            <person name="Fritz H.-J."/>
            <person name="Gottschalk G."/>
        </authorList>
    </citation>
    <scope>NUCLEOTIDE SEQUENCE [LARGE SCALE GENOMIC DNA]</scope>
    <source>
        <strain>ATCC BAA-159 / DSM 3647 / Goe1 / Go1 / JCM 11833 / OCM 88</strain>
    </source>
</reference>
<dbReference type="EC" id="7.1.3.1" evidence="2"/>
<dbReference type="EMBL" id="AF312701">
    <property type="protein sequence ID" value="AAM22542.1"/>
    <property type="molecule type" value="Genomic_DNA"/>
</dbReference>
<dbReference type="EMBL" id="AE008384">
    <property type="protein sequence ID" value="AAM30397.1"/>
    <property type="molecule type" value="Genomic_DNA"/>
</dbReference>
<dbReference type="RefSeq" id="WP_011032652.1">
    <property type="nucleotide sequence ID" value="NC_003901.1"/>
</dbReference>
<dbReference type="SMR" id="Q8PYZ7"/>
<dbReference type="TCDB" id="3.A.10.2.4">
    <property type="family name" value="the h(+), na(+)-translocating pyrophosphatase (m(+)-ppase) family"/>
</dbReference>
<dbReference type="GeneID" id="1479043"/>
<dbReference type="KEGG" id="mma:MM_0701"/>
<dbReference type="PATRIC" id="fig|192952.21.peg.834"/>
<dbReference type="eggNOG" id="arCOG04949">
    <property type="taxonomic scope" value="Archaea"/>
</dbReference>
<dbReference type="HOGENOM" id="CLU_008743_3_1_2"/>
<dbReference type="Proteomes" id="UP000000595">
    <property type="component" value="Chromosome"/>
</dbReference>
<dbReference type="GO" id="GO:0005886">
    <property type="term" value="C:plasma membrane"/>
    <property type="evidence" value="ECO:0007669"/>
    <property type="project" value="UniProtKB-SubCell"/>
</dbReference>
<dbReference type="GO" id="GO:0009678">
    <property type="term" value="F:diphosphate hydrolysis-driven proton transmembrane transporter activity"/>
    <property type="evidence" value="ECO:0007669"/>
    <property type="project" value="UniProtKB-UniRule"/>
</dbReference>
<dbReference type="GO" id="GO:0004427">
    <property type="term" value="F:inorganic diphosphate phosphatase activity"/>
    <property type="evidence" value="ECO:0007669"/>
    <property type="project" value="UniProtKB-UniRule"/>
</dbReference>
<dbReference type="GO" id="GO:0000287">
    <property type="term" value="F:magnesium ion binding"/>
    <property type="evidence" value="ECO:0007669"/>
    <property type="project" value="UniProtKB-UniRule"/>
</dbReference>
<dbReference type="HAMAP" id="MF_01129">
    <property type="entry name" value="PPase_energized_pump"/>
    <property type="match status" value="1"/>
</dbReference>
<dbReference type="InterPro" id="IPR004131">
    <property type="entry name" value="PPase-energised_H-pump"/>
</dbReference>
<dbReference type="NCBIfam" id="NF001951">
    <property type="entry name" value="PRK00733.1-2"/>
    <property type="match status" value="1"/>
</dbReference>
<dbReference type="NCBIfam" id="NF001953">
    <property type="entry name" value="PRK00733.2-1"/>
    <property type="match status" value="1"/>
</dbReference>
<dbReference type="NCBIfam" id="NF001959">
    <property type="entry name" value="PRK00733.3-4"/>
    <property type="match status" value="1"/>
</dbReference>
<dbReference type="NCBIfam" id="NF001960">
    <property type="entry name" value="PRK00733.3-5"/>
    <property type="match status" value="1"/>
</dbReference>
<dbReference type="NCBIfam" id="TIGR01104">
    <property type="entry name" value="V_PPase"/>
    <property type="match status" value="1"/>
</dbReference>
<dbReference type="PANTHER" id="PTHR31998">
    <property type="entry name" value="K(+)-INSENSITIVE PYROPHOSPHATE-ENERGIZED PROTON PUMP"/>
    <property type="match status" value="1"/>
</dbReference>
<dbReference type="Pfam" id="PF03030">
    <property type="entry name" value="H_PPase"/>
    <property type="match status" value="1"/>
</dbReference>
<dbReference type="PIRSF" id="PIRSF001265">
    <property type="entry name" value="H+-PPase"/>
    <property type="match status" value="1"/>
</dbReference>
<sequence>MERLIFTAPLAGLISLTFAAFFAKSILKEDAGNKRMKEIAEAIKEGSTAYMKRQYRTIAVVSVIISLLILFLLDEGLKIAAGFLAGAISSAAAGYIGMSISVRANVRTASAASGGAGKALKIAFRGGAVTGLAVIGLALLGTSSLYILYGDADLVVGFGFGASLISLFARAGGGIFTKAADVGADLVGKIEAGIPEDDPRNPAVIADNVGDNVGDCAGMGADLFETYVVTSLAAMLLGSLIIGTYKNAVLYPLMLGSAAIFASIISVFFVKVEKEGKVMSALYRGVGGSTVLSLIAFYYITGFLMGDSRFFYVTVAGVVITVLMVIVTEYYTSKSCRPVKTIAVSSETGAATNIISGLSAGFESTLVPAVVIAAGILVSYFIVGGSADPGTGLYGIAIASVAMLSTAGMIVALDSYGPITDNAGGIAQMANLPAQVRKVTDELDSVGNTTKAVTKGYAIGSTALGALALFADYRNKVSLESQSISLDSPVVLSGILLGAVLPFLFSAVMMSAVGKAAFEVVNEVRRQFREIPGIMEGTAKPEYGRCVDIVTKAALHDMAMPGFLAVIIPLLTGFFLGPEALAGLLTGLIVVGFMLALMMDNGGGAWDNAKKLIEDGYYGGKGSEAHRAAVVGDTVGDPFKDTAGPALNSLIKVVNMVAILFSPLIIGGGFL</sequence>
<protein>
    <recommendedName>
        <fullName evidence="2">K(+)-insensitive pyrophosphate-energized proton pump</fullName>
        <ecNumber evidence="2">7.1.3.1</ecNumber>
    </recommendedName>
    <alternativeName>
        <fullName evidence="2">Membrane-bound proton-translocating pyrophosphatase</fullName>
    </alternativeName>
    <alternativeName>
        <fullName evidence="2">Pyrophosphate-energized inorganic pyrophosphatase</fullName>
        <shortName evidence="2">H(+)-PPase</shortName>
    </alternativeName>
</protein>
<proteinExistence type="inferred from homology"/>
<feature type="chain" id="PRO_0000217037" description="K(+)-insensitive pyrophosphate-energized proton pump">
    <location>
        <begin position="1"/>
        <end position="671"/>
    </location>
</feature>
<feature type="transmembrane region" description="Helical" evidence="2">
    <location>
        <begin position="4"/>
        <end position="24"/>
    </location>
</feature>
<feature type="transmembrane region" description="Helical" evidence="2">
    <location>
        <begin position="57"/>
        <end position="77"/>
    </location>
</feature>
<feature type="transmembrane region" description="Helical" evidence="2">
    <location>
        <begin position="79"/>
        <end position="99"/>
    </location>
</feature>
<feature type="transmembrane region" description="Helical" evidence="2">
    <location>
        <begin position="128"/>
        <end position="148"/>
    </location>
</feature>
<feature type="transmembrane region" description="Helical" evidence="2">
    <location>
        <begin position="156"/>
        <end position="176"/>
    </location>
</feature>
<feature type="transmembrane region" description="Helical" evidence="2">
    <location>
        <begin position="223"/>
        <end position="243"/>
    </location>
</feature>
<feature type="transmembrane region" description="Helical" evidence="2">
    <location>
        <begin position="249"/>
        <end position="269"/>
    </location>
</feature>
<feature type="transmembrane region" description="Helical" evidence="2">
    <location>
        <begin position="285"/>
        <end position="305"/>
    </location>
</feature>
<feature type="transmembrane region" description="Helical" evidence="2">
    <location>
        <begin position="310"/>
        <end position="330"/>
    </location>
</feature>
<feature type="transmembrane region" description="Helical" evidence="2">
    <location>
        <begin position="365"/>
        <end position="385"/>
    </location>
</feature>
<feature type="transmembrane region" description="Helical" evidence="2">
    <location>
        <begin position="393"/>
        <end position="413"/>
    </location>
</feature>
<feature type="transmembrane region" description="Helical" evidence="2">
    <location>
        <begin position="452"/>
        <end position="472"/>
    </location>
</feature>
<feature type="transmembrane region" description="Helical" evidence="2">
    <location>
        <begin position="490"/>
        <end position="510"/>
    </location>
</feature>
<feature type="transmembrane region" description="Helical" evidence="2">
    <location>
        <begin position="558"/>
        <end position="578"/>
    </location>
</feature>
<feature type="transmembrane region" description="Helical" evidence="2">
    <location>
        <begin position="579"/>
        <end position="599"/>
    </location>
</feature>
<feature type="transmembrane region" description="Helical" evidence="2">
    <location>
        <begin position="650"/>
        <end position="670"/>
    </location>
</feature>
<feature type="binding site" evidence="1">
    <location>
        <position position="178"/>
    </location>
    <ligand>
        <name>substrate</name>
    </ligand>
</feature>
<feature type="binding site" evidence="1">
    <location>
        <position position="181"/>
    </location>
    <ligand>
        <name>Mg(2+)</name>
        <dbReference type="ChEBI" id="CHEBI:18420"/>
        <label>1</label>
    </ligand>
</feature>
<feature type="binding site" evidence="1">
    <location>
        <position position="185"/>
    </location>
    <ligand>
        <name>Mg(2+)</name>
        <dbReference type="ChEBI" id="CHEBI:18420"/>
        <label>1</label>
    </ligand>
</feature>
<feature type="binding site" evidence="1">
    <location>
        <position position="208"/>
    </location>
    <ligand>
        <name>Mg(2+)</name>
        <dbReference type="ChEBI" id="CHEBI:18420"/>
        <label>2</label>
    </ligand>
</feature>
<feature type="binding site" evidence="1">
    <location>
        <position position="211"/>
    </location>
    <ligand>
        <name>Mg(2+)</name>
        <dbReference type="ChEBI" id="CHEBI:18420"/>
        <label>2</label>
    </ligand>
</feature>
<feature type="binding site" evidence="1">
    <location>
        <position position="421"/>
    </location>
    <ligand>
        <name>Mg(2+)</name>
        <dbReference type="ChEBI" id="CHEBI:18420"/>
        <label>2</label>
    </ligand>
</feature>
<feature type="binding site" evidence="1">
    <location>
        <position position="607"/>
    </location>
    <ligand>
        <name>Ca(2+)</name>
        <dbReference type="ChEBI" id="CHEBI:29108"/>
    </ligand>
</feature>
<feature type="binding site" evidence="1">
    <location>
        <position position="633"/>
    </location>
    <ligand>
        <name>Ca(2+)</name>
        <dbReference type="ChEBI" id="CHEBI:29108"/>
    </ligand>
</feature>
<feature type="binding site" evidence="1">
    <location>
        <position position="637"/>
    </location>
    <ligand>
        <name>Ca(2+)</name>
        <dbReference type="ChEBI" id="CHEBI:29108"/>
    </ligand>
</feature>
<feature type="binding site" evidence="1">
    <location>
        <position position="640"/>
    </location>
    <ligand>
        <name>substrate</name>
    </ligand>
</feature>
<feature type="site" description="Important for ion transport" evidence="1">
    <location>
        <position position="170"/>
    </location>
</feature>
<feature type="site" description="Important for ion transport" evidence="1">
    <location>
        <position position="215"/>
    </location>
</feature>
<feature type="site" description="Important for ion transport" evidence="1">
    <location>
        <position position="222"/>
    </location>
</feature>
<feature type="site" description="Important for potassium independence" evidence="1">
    <location>
        <position position="451"/>
    </location>
</feature>
<feature type="site" description="Important for ion transport" evidence="1">
    <location>
        <position position="641"/>
    </location>
</feature>
<feature type="site" description="Important for ion transport" evidence="1">
    <location>
        <position position="652"/>
    </location>
</feature>
<evidence type="ECO:0000250" key="1"/>
<evidence type="ECO:0000255" key="2">
    <source>
        <dbReference type="HAMAP-Rule" id="MF_01129"/>
    </source>
</evidence>
<name>HPPA2_METMA</name>
<gene>
    <name evidence="2" type="primary">hppA2</name>
    <name type="ordered locus">MM_0701</name>
</gene>
<organism>
    <name type="scientific">Methanosarcina mazei (strain ATCC BAA-159 / DSM 3647 / Goe1 / Go1 / JCM 11833 / OCM 88)</name>
    <name type="common">Methanosarcina frisia</name>
    <dbReference type="NCBI Taxonomy" id="192952"/>
    <lineage>
        <taxon>Archaea</taxon>
        <taxon>Methanobacteriati</taxon>
        <taxon>Methanobacteriota</taxon>
        <taxon>Stenosarchaea group</taxon>
        <taxon>Methanomicrobia</taxon>
        <taxon>Methanosarcinales</taxon>
        <taxon>Methanosarcinaceae</taxon>
        <taxon>Methanosarcina</taxon>
    </lineage>
</organism>